<organism>
    <name type="scientific">Pyrobaculum calidifontis (strain DSM 21063 / JCM 11548 / VA1)</name>
    <dbReference type="NCBI Taxonomy" id="410359"/>
    <lineage>
        <taxon>Archaea</taxon>
        <taxon>Thermoproteota</taxon>
        <taxon>Thermoprotei</taxon>
        <taxon>Thermoproteales</taxon>
        <taxon>Thermoproteaceae</taxon>
        <taxon>Pyrobaculum</taxon>
    </lineage>
</organism>
<evidence type="ECO:0000255" key="1">
    <source>
        <dbReference type="HAMAP-Rule" id="MF_00112"/>
    </source>
</evidence>
<feature type="chain" id="PRO_0000304187" description="Geranylgeranylglyceryl phosphate synthase">
    <location>
        <begin position="1"/>
        <end position="241"/>
    </location>
</feature>
<feature type="binding site" evidence="1">
    <location>
        <position position="19"/>
    </location>
    <ligand>
        <name>Mg(2+)</name>
        <dbReference type="ChEBI" id="CHEBI:18420"/>
    </ligand>
</feature>
<feature type="binding site" evidence="1">
    <location>
        <position position="46"/>
    </location>
    <ligand>
        <name>Mg(2+)</name>
        <dbReference type="ChEBI" id="CHEBI:18420"/>
    </ligand>
</feature>
<feature type="binding site" evidence="1">
    <location>
        <begin position="167"/>
        <end position="173"/>
    </location>
    <ligand>
        <name>sn-glycerol 1-phosphate</name>
        <dbReference type="ChEBI" id="CHEBI:57685"/>
    </ligand>
</feature>
<feature type="binding site" evidence="1">
    <location>
        <begin position="198"/>
        <end position="199"/>
    </location>
    <ligand>
        <name>sn-glycerol 1-phosphate</name>
        <dbReference type="ChEBI" id="CHEBI:57685"/>
    </ligand>
</feature>
<feature type="binding site" evidence="1">
    <location>
        <begin position="220"/>
        <end position="221"/>
    </location>
    <ligand>
        <name>sn-glycerol 1-phosphate</name>
        <dbReference type="ChEBI" id="CHEBI:57685"/>
    </ligand>
</feature>
<accession>A3MUU3</accession>
<protein>
    <recommendedName>
        <fullName evidence="1">Geranylgeranylglyceryl phosphate synthase</fullName>
        <shortName evidence="1">GGGP synthase</shortName>
        <shortName evidence="1">GGGPS</shortName>
        <ecNumber evidence="1">2.5.1.41</ecNumber>
    </recommendedName>
    <alternativeName>
        <fullName evidence="1">(S)-3-O-geranylgeranylglyceryl phosphate synthase</fullName>
    </alternativeName>
    <alternativeName>
        <fullName evidence="1">Phosphoglycerol geranylgeranyltransferase</fullName>
    </alternativeName>
</protein>
<keyword id="KW-0963">Cytoplasm</keyword>
<keyword id="KW-0444">Lipid biosynthesis</keyword>
<keyword id="KW-0443">Lipid metabolism</keyword>
<keyword id="KW-0460">Magnesium</keyword>
<keyword id="KW-0479">Metal-binding</keyword>
<keyword id="KW-0594">Phospholipid biosynthesis</keyword>
<keyword id="KW-1208">Phospholipid metabolism</keyword>
<keyword id="KW-0808">Transferase</keyword>
<dbReference type="EC" id="2.5.1.41" evidence="1"/>
<dbReference type="EMBL" id="CP000561">
    <property type="protein sequence ID" value="ABO08410.1"/>
    <property type="molecule type" value="Genomic_DNA"/>
</dbReference>
<dbReference type="RefSeq" id="WP_011849668.1">
    <property type="nucleotide sequence ID" value="NC_009073.1"/>
</dbReference>
<dbReference type="SMR" id="A3MUU3"/>
<dbReference type="STRING" id="410359.Pcal_0985"/>
<dbReference type="GeneID" id="4909607"/>
<dbReference type="KEGG" id="pcl:Pcal_0985"/>
<dbReference type="eggNOG" id="arCOG01085">
    <property type="taxonomic scope" value="Archaea"/>
</dbReference>
<dbReference type="HOGENOM" id="CLU_068610_0_0_2"/>
<dbReference type="OrthoDB" id="7409at2157"/>
<dbReference type="UniPathway" id="UPA00940"/>
<dbReference type="Proteomes" id="UP000001431">
    <property type="component" value="Chromosome"/>
</dbReference>
<dbReference type="GO" id="GO:0005737">
    <property type="term" value="C:cytoplasm"/>
    <property type="evidence" value="ECO:0007669"/>
    <property type="project" value="UniProtKB-SubCell"/>
</dbReference>
<dbReference type="GO" id="GO:0000287">
    <property type="term" value="F:magnesium ion binding"/>
    <property type="evidence" value="ECO:0007669"/>
    <property type="project" value="UniProtKB-UniRule"/>
</dbReference>
<dbReference type="GO" id="GO:0047294">
    <property type="term" value="F:phosphoglycerol geranylgeranyltransferase activity"/>
    <property type="evidence" value="ECO:0007669"/>
    <property type="project" value="UniProtKB-UniRule"/>
</dbReference>
<dbReference type="GO" id="GO:0046474">
    <property type="term" value="P:glycerophospholipid biosynthetic process"/>
    <property type="evidence" value="ECO:0007669"/>
    <property type="project" value="UniProtKB-UniRule"/>
</dbReference>
<dbReference type="CDD" id="cd02812">
    <property type="entry name" value="PcrB_like"/>
    <property type="match status" value="1"/>
</dbReference>
<dbReference type="FunFam" id="3.20.20.390:FF:000001">
    <property type="entry name" value="Heptaprenylglyceryl phosphate synthase"/>
    <property type="match status" value="1"/>
</dbReference>
<dbReference type="Gene3D" id="3.20.20.390">
    <property type="entry name" value="FMN-linked oxidoreductases"/>
    <property type="match status" value="1"/>
</dbReference>
<dbReference type="HAMAP" id="MF_00112">
    <property type="entry name" value="GGGP_HepGP_synthase"/>
    <property type="match status" value="1"/>
</dbReference>
<dbReference type="InterPro" id="IPR039074">
    <property type="entry name" value="GGGP/HepGP_synthase_I"/>
</dbReference>
<dbReference type="InterPro" id="IPR038597">
    <property type="entry name" value="GGGP/HepGP_synthase_sf"/>
</dbReference>
<dbReference type="InterPro" id="IPR008205">
    <property type="entry name" value="GGGP_HepGP_synthase"/>
</dbReference>
<dbReference type="InterPro" id="IPR010946">
    <property type="entry name" value="GGGP_synth"/>
</dbReference>
<dbReference type="NCBIfam" id="TIGR01769">
    <property type="entry name" value="GGGP"/>
    <property type="match status" value="1"/>
</dbReference>
<dbReference type="NCBIfam" id="TIGR01768">
    <property type="entry name" value="GGGP-family"/>
    <property type="match status" value="1"/>
</dbReference>
<dbReference type="NCBIfam" id="NF003198">
    <property type="entry name" value="PRK04169.1-2"/>
    <property type="match status" value="1"/>
</dbReference>
<dbReference type="PANTHER" id="PTHR40029">
    <property type="match status" value="1"/>
</dbReference>
<dbReference type="PANTHER" id="PTHR40029:SF2">
    <property type="entry name" value="HEPTAPRENYLGLYCERYL PHOSPHATE SYNTHASE"/>
    <property type="match status" value="1"/>
</dbReference>
<dbReference type="Pfam" id="PF01884">
    <property type="entry name" value="PcrB"/>
    <property type="match status" value="1"/>
</dbReference>
<dbReference type="SUPFAM" id="SSF51395">
    <property type="entry name" value="FMN-linked oxidoreductases"/>
    <property type="match status" value="1"/>
</dbReference>
<sequence length="241" mass="25763">MKLVDYLLEGSVKHFTLIDPDKSVDYLKIVRYALDAGTDGILVGGSLGIRETQMTQVVKDIKSVAHVPVVLFPGSPSQLTEEADGVLFLSVLNSLDPYFIIGAQVQGAVLIAKHFPRLEVISTAYVIVGDGGAAGFVSMSKPIPYARWDLAVAYALAAYYIGFGAVYLEAGSGAPQPVPPEMVRAVRKVFPRVLIVGGGIRSGEAARQLARERPNVIVTGTLAEEQPEKLAEVVRAIKSSL</sequence>
<comment type="function">
    <text evidence="1">Prenyltransferase that catalyzes the transfer of the geranylgeranyl moiety of geranylgeranyl diphosphate (GGPP) to the C3 hydroxyl of sn-glycerol-1-phosphate (G1P). This reaction is the first ether-bond-formation step in the biosynthesis of archaeal membrane lipids.</text>
</comment>
<comment type="catalytic activity">
    <reaction evidence="1">
        <text>sn-glycerol 1-phosphate + (2E,6E,10E)-geranylgeranyl diphosphate = sn-3-O-(geranylgeranyl)glycerol 1-phosphate + diphosphate</text>
        <dbReference type="Rhea" id="RHEA:23404"/>
        <dbReference type="ChEBI" id="CHEBI:33019"/>
        <dbReference type="ChEBI" id="CHEBI:57677"/>
        <dbReference type="ChEBI" id="CHEBI:57685"/>
        <dbReference type="ChEBI" id="CHEBI:58756"/>
        <dbReference type="EC" id="2.5.1.41"/>
    </reaction>
</comment>
<comment type="cofactor">
    <cofactor evidence="1">
        <name>Mg(2+)</name>
        <dbReference type="ChEBI" id="CHEBI:18420"/>
    </cofactor>
</comment>
<comment type="pathway">
    <text evidence="1">Membrane lipid metabolism; glycerophospholipid metabolism.</text>
</comment>
<comment type="subcellular location">
    <subcellularLocation>
        <location evidence="1">Cytoplasm</location>
    </subcellularLocation>
</comment>
<comment type="similarity">
    <text evidence="1">Belongs to the GGGP/HepGP synthase family. Group II subfamily.</text>
</comment>
<reference key="1">
    <citation type="submission" date="2007-02" db="EMBL/GenBank/DDBJ databases">
        <title>Complete sequence of Pyrobaculum calidifontis JCM 11548.</title>
        <authorList>
            <consortium name="US DOE Joint Genome Institute"/>
            <person name="Copeland A."/>
            <person name="Lucas S."/>
            <person name="Lapidus A."/>
            <person name="Barry K."/>
            <person name="Glavina del Rio T."/>
            <person name="Dalin E."/>
            <person name="Tice H."/>
            <person name="Pitluck S."/>
            <person name="Chain P."/>
            <person name="Malfatti S."/>
            <person name="Shin M."/>
            <person name="Vergez L."/>
            <person name="Schmutz J."/>
            <person name="Larimer F."/>
            <person name="Land M."/>
            <person name="Hauser L."/>
            <person name="Kyrpides N."/>
            <person name="Mikhailova N."/>
            <person name="Cozen A.E."/>
            <person name="Fitz-Gibbon S.T."/>
            <person name="House C.H."/>
            <person name="Saltikov C."/>
            <person name="Lowe T.M."/>
            <person name="Richardson P."/>
        </authorList>
    </citation>
    <scope>NUCLEOTIDE SEQUENCE [LARGE SCALE GENOMIC DNA]</scope>
    <source>
        <strain>DSM 21063 / JCM 11548 / VA1</strain>
    </source>
</reference>
<proteinExistence type="inferred from homology"/>
<name>GGGPS_PYRCJ</name>
<gene>
    <name type="ordered locus">Pcal_0985</name>
</gene>